<gene>
    <name type="ORF">ORF2</name>
</gene>
<organismHost>
    <name type="scientific">Bandicota bengalensis</name>
    <name type="common">lesser bandicoot rat</name>
    <dbReference type="NCBI Taxonomy" id="69079"/>
</organismHost>
<organismHost>
    <name type="scientific">Callithrix</name>
    <dbReference type="NCBI Taxonomy" id="9481"/>
</organismHost>
<organismHost>
    <name type="scientific">Cercopithecus hamlyni</name>
    <name type="common">Owl-faced monkey</name>
    <name type="synonym">Hamlyn's monkey</name>
    <dbReference type="NCBI Taxonomy" id="9536"/>
</organismHost>
<organismHost>
    <name type="scientific">Chlorocebus aethiops</name>
    <name type="common">Green monkey</name>
    <name type="synonym">Cercopithecus aethiops</name>
    <dbReference type="NCBI Taxonomy" id="9534"/>
</organismHost>
<organismHost>
    <name type="scientific">Homo sapiens</name>
    <name type="common">Human</name>
    <dbReference type="NCBI Taxonomy" id="9606"/>
</organismHost>
<organismHost>
    <name type="scientific">Macaca</name>
    <name type="common">macaques</name>
    <dbReference type="NCBI Taxonomy" id="9539"/>
</organismHost>
<organismHost>
    <name type="scientific">Mus musculus</name>
    <name type="common">Mouse</name>
    <dbReference type="NCBI Taxonomy" id="10090"/>
</organismHost>
<organismHost>
    <name type="scientific">Pan troglodytes</name>
    <name type="common">Chimpanzee</name>
    <dbReference type="NCBI Taxonomy" id="9598"/>
</organismHost>
<organismHost>
    <name type="scientific">Saimiri</name>
    <name type="common">squirrel monkeys</name>
    <dbReference type="NCBI Taxonomy" id="9520"/>
</organismHost>
<organismHost>
    <name type="scientific">Sus scrofa</name>
    <name type="common">Pig</name>
    <dbReference type="NCBI Taxonomy" id="9823"/>
</organismHost>
<sequence length="660" mass="70937">MGPRPILLLFLMFLPMLLAPPPGQPSGRRRGRRSGGSGGGFWGDRVDSQPFAIPYIHPTNPFAPNVTAAAGAGPRVRQPVRPLGSAWRDQAQRPAAASRRRPTTAGAAPLTAVAPAHDTPPVPDVDSRGAILRRQYNLSTSPLTSSVATGTNLVLYAAPLSPLLPLQDGTNTHIMATEASNYAQYRVARATIRYRPLVPNAVGGYAISISFWPQTTPTPTSVDMNSITSTDVRILVQPGIASELVIPSERLHYRNQGWRSVETSGVAEEEATSGLVMLCIHGSPVNSYTNTPYTGALGLLDFALELEFRNLTPGNTNTRVSRYSSTARHRLRRGADGTAELTTTAATRFMKDLYFTSTNGVGEIGRGIALTLFNLADTLLGGLPTELISSAGGQLFYSRPVVSANGEPTVKLYTSVENAQQDKGIAIPNDIDLGESRVVIQDYDNQHEQDRPTPSPAPSRPFSVLRANDVLWLSLTAAEYDQSTYGSSTGPVYVSDSVTLVNVATGAQAVARSLDWTKVTLDGRPLSTIQQYSKIFFVLPLRGKLSFWEAGTTRPGYPYNYNTTASDQLLVENAAGHRVAISTYTTSLGAGPVSISAVAVLGPHSALALLEDTLDYPARAHTFDDFCPECRPLGLQGCAFQSTVAELQRLKMKVGKTREL</sequence>
<proteinExistence type="evidence at protein level"/>
<accession>Q68985</accession>
<feature type="signal peptide" evidence="5">
    <location>
        <begin position="1"/>
        <end position="19"/>
    </location>
</feature>
<feature type="chain" id="PRO_0000445487" description="Pro-secreted protein ORF2" evidence="5">
    <location>
        <begin position="20"/>
        <end position="660"/>
    </location>
</feature>
<feature type="chain" id="PRO_0000456930" description="Secreted protein ORF2" evidence="2">
    <location>
        <begin position="34"/>
        <end position="660"/>
    </location>
</feature>
<feature type="region of interest" description="Disordered" evidence="6">
    <location>
        <begin position="20"/>
        <end position="43"/>
    </location>
</feature>
<feature type="region of interest" description="Disordered" evidence="6">
    <location>
        <begin position="66"/>
        <end position="127"/>
    </location>
</feature>
<feature type="region of interest" description="particle formation" evidence="1">
    <location>
        <begin position="368"/>
        <end position="394"/>
    </location>
</feature>
<feature type="region of interest" description="Oligomerization" evidence="9">
    <location>
        <begin position="585"/>
        <end position="610"/>
    </location>
</feature>
<feature type="short sequence motif" description="Nuclear localization signal" evidence="2">
    <location>
        <begin position="28"/>
        <end position="33"/>
    </location>
</feature>
<feature type="compositionally biased region" description="Low complexity" evidence="6">
    <location>
        <begin position="92"/>
        <end position="116"/>
    </location>
</feature>
<feature type="site" description="Cleavage" evidence="2">
    <location>
        <begin position="33"/>
        <end position="34"/>
    </location>
</feature>
<feature type="site" description="Possible cleavage" evidence="3">
    <location>
        <begin position="578"/>
        <end position="579"/>
    </location>
</feature>
<feature type="site" description="Possible cleavage" evidence="3">
    <location>
        <begin position="601"/>
        <end position="602"/>
    </location>
</feature>
<feature type="glycosylation site" description="N-linked (GlcNAc...) asparagine; by host" evidence="7">
    <location>
        <position position="137"/>
    </location>
</feature>
<feature type="glycosylation site" description="N-linked (GlcNAc...) asparagine; by host" evidence="7">
    <location>
        <position position="310"/>
    </location>
</feature>
<feature type="glycosylation site" description="N-linked (GlcNAc...) asparagine; by host" evidence="7">
    <location>
        <position position="562"/>
    </location>
</feature>
<feature type="splice variant" id="VSP_059887" description="In isoform Capsid protein.">
    <location>
        <begin position="1"/>
        <end position="15"/>
    </location>
</feature>
<feature type="mutagenesis site" description="Slight loss of glycosylation; when associated with A-562." evidence="7">
    <original>N</original>
    <variation>A</variation>
    <location>
        <position position="137"/>
    </location>
</feature>
<feature type="mutagenesis site" description="Complete loss of glycosylation when associated with A-137 or A-562." evidence="7">
    <original>N</original>
    <variation>A</variation>
    <location>
        <position position="310"/>
    </location>
</feature>
<feature type="mutagenesis site" description="Slight loss of glycosylation; when associated with A-137." evidence="7">
    <original>N</original>
    <variation>A</variation>
    <location>
        <position position="562"/>
    </location>
</feature>
<reference key="1">
    <citation type="journal article" date="1995" name="J. Clin. Microbiol.">
        <title>An Indian strain of hepatitis E virus (HEV): cloning, sequence, and expression of structural region and antibody responses in sera from individuals from an area of high-level HEV endemicity.</title>
        <authorList>
            <person name="Panda S.K."/>
            <person name="Nanda S.K."/>
            <person name="Zafrullah M."/>
            <person name="Ansari I.H."/>
            <person name="Ozdener M.H."/>
            <person name="Jameel S."/>
        </authorList>
    </citation>
    <scope>NUCLEOTIDE SEQUENCE [GENOMIC RNA]</scope>
</reference>
<reference key="2">
    <citation type="journal article" date="2000" name="J. Virol.">
        <title>The in vitro-synthesized RNA from a cDNA clone of hepatitis E virus is infectious.</title>
        <authorList>
            <person name="Panda S.K."/>
            <person name="Ansari I.H."/>
            <person name="Durgapal H."/>
            <person name="Agrawal S."/>
            <person name="Jameel S."/>
        </authorList>
    </citation>
    <scope>NUCLEOTIDE SEQUENCE [GENOMIC RNA]</scope>
    <source>
        <strain>Infectious clone pSGI-HEV</strain>
    </source>
</reference>
<reference key="3">
    <citation type="journal article" date="1996" name="J. Virol.">
        <title>Expression in animal cells and characterization of the hepatitis E virus structural proteins.</title>
        <authorList>
            <person name="Jameel S."/>
            <person name="Zafrullah M."/>
            <person name="Ozdener M.H."/>
            <person name="Panda S.K."/>
        </authorList>
    </citation>
    <scope>SUBUNIT (ISOFORM SECRETED PROTEIN ORF2)</scope>
    <scope>GLYCOSYLATION (ISOFORM SECRETED PROTEIN ORF2)</scope>
    <scope>SUBCELLULAR LOCATION (ISOFORM CAPSID PROTEIN ORF2)</scope>
</reference>
<reference key="4">
    <citation type="journal article" date="1999" name="J. Virol.">
        <title>Mutational analysis of glycosylation, membrane translocation, and cell surface expression of the hepatitis E virus ORF2 protein.</title>
        <authorList>
            <person name="Zafrullah M."/>
            <person name="Ozdener M.H."/>
            <person name="Kumar R."/>
            <person name="Panda S.K."/>
            <person name="Jameel S."/>
        </authorList>
    </citation>
    <scope>GLYCOSYLATION AT ASN-137 AND ASN-562 (ISOFORM SECRETED PROTEIN ORF2)</scope>
    <scope>MUTAGENESIS OF ASN-137; ASN-310 AND ASN-562</scope>
    <scope>SUBCELLULAR LOCATION (ISOFORM CAPSID PROTEIN ORF2)</scope>
    <scope>SIGNAL SEQUENCE</scope>
</reference>
<reference key="5">
    <citation type="journal article" date="2001" name="J. Biomed. Biotechnol.">
        <title>A C-terminal hydrophobic region is required for homo-oligomerization of the Hepatitis E virus capsid (ORF2) protein.</title>
        <authorList>
            <person name="Xiaofang L."/>
            <person name="Zafrullah M."/>
            <person name="Ahmad F."/>
            <person name="Jameel S."/>
        </authorList>
    </citation>
    <scope>SUBUNIT (ISOFORM CAPSID PROTEIN ORF2)</scope>
    <scope>REGION OF OLIGOMERIZATION (ISOFORM CAPSID PROTEIN ORF2)</scope>
</reference>
<reference key="6">
    <citation type="journal article" date="2002" name="J. Biol. Chem.">
        <title>The phosphorylated form of the ORF3 protein of hepatitis E virus interacts with its non-glycosylated form of the major capsid protein, ORF2.</title>
        <authorList>
            <person name="Tyagi S."/>
            <person name="Korkaya H."/>
            <person name="Zafrullah M."/>
            <person name="Jameel S."/>
            <person name="Lal S.K."/>
        </authorList>
    </citation>
    <scope>INTERACTION WITH PROTEIN ORF3 (ISOFORM CAPSID PROTEIN ORF2)</scope>
    <scope>SUBCELLULAR LOCATION (ISOFORM CAPSID PROTEIN ORF2)</scope>
</reference>
<reference key="7">
    <citation type="journal article" date="2007" name="J. Virol.">
        <title>Cytoplasmic localization of the ORF2 protein of hepatitis E virus is dependent on its ability to undergo retrotranslocation from the endoplasmic reticulum.</title>
        <authorList>
            <person name="Surjit M."/>
            <person name="Jameel S."/>
            <person name="Lal S.K."/>
        </authorList>
    </citation>
    <scope>SUBCELLULAR LOCATION (ISOFORM CAPSID PROTEIN ORF2)</scope>
    <source>
        <strain>Infectious clone pSGI-HEV</strain>
    </source>
</reference>
<keyword id="KW-0024">Alternative initiation</keyword>
<keyword id="KW-0167">Capsid protein</keyword>
<keyword id="KW-0325">Glycoprotein</keyword>
<keyword id="KW-1035">Host cytoplasm</keyword>
<keyword id="KW-1038">Host endoplasmic reticulum</keyword>
<keyword id="KW-1040">Host Golgi apparatus</keyword>
<keyword id="KW-0945">Host-virus interaction</keyword>
<keyword id="KW-0694">RNA-binding</keyword>
<keyword id="KW-0964">Secreted</keyword>
<keyword id="KW-0732">Signal</keyword>
<keyword id="KW-1140">T=1 icosahedral capsid protein</keyword>
<keyword id="KW-1161">Viral attachment to host cell</keyword>
<keyword id="KW-1234">Viral attachment to host entry receptor</keyword>
<keyword id="KW-0946">Virion</keyword>
<keyword id="KW-1160">Virus entry into host cell</keyword>
<comment type="function">
    <molecule>Isoform Secreted protein ORF2</molecule>
    <text evidence="4">Plays a role in the inhibition of host antibody-mediated neutralization without blocking viral cell entry.</text>
</comment>
<comment type="function">
    <molecule>Isoform Capsid protein</molecule>
    <text evidence="1 2 3">Forms an icosahedral capsid with a T=1 symmetry and a 34 nm diameter. The capsid is composed of 60 copies linked to each other. Binds to the 5' end of the genomic RNA to mediate genome encapsidation (By similarity). Binds to heparin surface proteoglycans (HSPGs) to mediate viral entry. Additionally, the interactions with host ASGR1 and ASGR2 facilitate viral infection of hepatocytes (By similarity). Inhibits IFN production by blocking host TBK1-induced IRF3 phosphorylation (By similarity). The nuclear form probably modulates host gene expression (By similarity).</text>
</comment>
<comment type="subunit">
    <molecule>Isoform Secreted protein ORF2</molecule>
    <text evidence="4">Homodimer.</text>
</comment>
<comment type="subunit">
    <molecule>Isoform Capsid protein</molecule>
    <text evidence="3 8 9 11">Self-assembles to form the capsid. The capsid is dominated by dimers that define the 30 morphological units (PubMed:12488605, PubMed:8523527). Interacts with phosphorylated protein ORF3 (PubMed:11934888). Interacts with host TMEM134. Interacts with host ASGR1 and ASGR2; these interactions facilitate infection of host hepatocytes (By similarity).</text>
</comment>
<comment type="interaction">
    <interactant intactId="EBI-11180197">
        <id>Q68985</id>
    </interactant>
    <interactant intactId="EBI-11179420">
        <id>Q9WC28</id>
        <label>ORF1</label>
    </interactant>
    <organismsDiffer>false</organismsDiffer>
    <experiments>2</experiments>
</comment>
<comment type="interaction">
    <interactant intactId="EBI-11180197">
        <id>Q68985</id>
    </interactant>
    <interactant intactId="EBI-11180197">
        <id>Q68985</id>
        <label>ORF2</label>
    </interactant>
    <organismsDiffer>false</organismsDiffer>
    <experiments>24</experiments>
</comment>
<comment type="subcellular location">
    <molecule>Isoform Secreted protein ORF2</molecule>
    <subcellularLocation>
        <location evidence="3">Secreted</location>
    </subcellularLocation>
    <text evidence="4 7">Cotranslationally translocated into the ER (PubMed:10196303). Translation from the first AUG produces a full-length protein with a signal peptide that can direct the protein into the secretory pathway (By similarity).</text>
</comment>
<comment type="subcellular location">
    <molecule>Isoform Capsid protein</molecule>
    <subcellularLocation>
        <location evidence="3">Virion</location>
    </subcellularLocation>
    <subcellularLocation>
        <location evidence="8 10 11">Host cytoplasm</location>
    </subcellularLocation>
    <subcellularLocation>
        <location evidence="3">Host endoplasmic reticulum</location>
    </subcellularLocation>
    <subcellularLocation>
        <location evidence="3">Host Golgi apparatus</location>
    </subcellularLocation>
    <subcellularLocation>
        <location evidence="7 10 11">Host cell surface</location>
    </subcellularLocation>
    <text evidence="2 3 4">Translation from the internal AUG codon disrupts the signal sequence, producing a cytoplasmic protein that is responsible for virion assembly (By similarity). Shuttles between cytoplasm and nucleus (By similarity). This isoform is found in quasi-enveloped virions (By similarity).</text>
</comment>
<comment type="alternative products">
    <event type="alternative initiation"/>
    <isoform>
        <id>Q68985-1</id>
        <name>Secreted protein ORF2</name>
        <name>ORF2s</name>
        <name>ORF2g</name>
        <sequence type="displayed"/>
    </isoform>
    <isoform>
        <id>Q68985-2</id>
        <name>Capsid protein</name>
        <name>ORF2c</name>
        <name>ORF2i</name>
        <sequence type="described" ref="VSP_059887"/>
    </isoform>
</comment>
<comment type="domain">
    <text evidence="2">The Arginine-Rich Motif (ARM) acts as a nuclear localization signal that drives the nuclear translocation of isoform capsid protein. This motif has also been linked to the inhibition of host IRF3 phosphorylation.</text>
</comment>
<comment type="PTM">
    <molecule>Pro-secreted protein ORF2</molecule>
    <text evidence="2">Cleaved by host protease in the N-terminus.</text>
</comment>
<comment type="PTM">
    <molecule>Isoform Secreted protein ORF2</molecule>
    <text evidence="3">N-glycosylated.</text>
</comment>
<comment type="PTM">
    <molecule>Isoform Capsid protein</molecule>
    <text evidence="3">Not N-glycosylated. The C-terminus of the capsid protein ORF2 is truncated in non-enveloped virions shedded in feces, probably due to host proteases.</text>
</comment>
<comment type="miscellaneous">
    <text evidence="3">The viral particles present in feces and bile are non-enveloped, while those in circulating blood and culture supernatants are covered with a cellular membrane (quasi-enveloped).</text>
</comment>
<comment type="similarity">
    <text evidence="12">Belongs to the hepevirus capsid protein family.</text>
</comment>
<comment type="caution">
    <text evidence="7">Asn-310 was considered to be a major site of N-glycosylation by host but the surrounding motif does not correspond to the N-{P}-[ST]-{P} pattern.</text>
</comment>
<evidence type="ECO:0000250" key="1">
    <source>
        <dbReference type="UniProtKB" id="P29326"/>
    </source>
</evidence>
<evidence type="ECO:0000250" key="2">
    <source>
        <dbReference type="UniProtKB" id="P33426"/>
    </source>
</evidence>
<evidence type="ECO:0000250" key="3">
    <source>
        <dbReference type="UniProtKB" id="Q81871"/>
    </source>
</evidence>
<evidence type="ECO:0000250" key="4">
    <source>
        <dbReference type="UniProtKB" id="Q9YLQ9"/>
    </source>
</evidence>
<evidence type="ECO:0000255" key="5"/>
<evidence type="ECO:0000256" key="6">
    <source>
        <dbReference type="SAM" id="MobiDB-lite"/>
    </source>
</evidence>
<evidence type="ECO:0000269" key="7">
    <source>
    </source>
</evidence>
<evidence type="ECO:0000269" key="8">
    <source>
    </source>
</evidence>
<evidence type="ECO:0000269" key="9">
    <source>
    </source>
</evidence>
<evidence type="ECO:0000269" key="10">
    <source>
    </source>
</evidence>
<evidence type="ECO:0000269" key="11">
    <source>
    </source>
</evidence>
<evidence type="ECO:0000305" key="12"/>
<name>CAPSD_HEVHY</name>
<organism>
    <name type="scientific">Hepatitis E virus genotype 1 (isolate Human/India/Hyderabad)</name>
    <name type="common">HEV-1</name>
    <dbReference type="NCBI Taxonomy" id="512346"/>
    <lineage>
        <taxon>Viruses</taxon>
        <taxon>Riboviria</taxon>
        <taxon>Orthornavirae</taxon>
        <taxon>Kitrinoviricota</taxon>
        <taxon>Alsuviricetes</taxon>
        <taxon>Hepelivirales</taxon>
        <taxon>Hepeviridae</taxon>
        <taxon>Orthohepevirinae</taxon>
        <taxon>Paslahepevirus</taxon>
        <taxon>Hepatitis E virus</taxon>
    </lineage>
</organism>
<dbReference type="EMBL" id="U22532">
    <property type="protein sequence ID" value="AAA97366.1"/>
    <property type="molecule type" value="Genomic_RNA"/>
</dbReference>
<dbReference type="EMBL" id="AF076239">
    <property type="protein sequence ID" value="AAC27936.1"/>
    <property type="molecule type" value="Genomic_RNA"/>
</dbReference>
<dbReference type="SMR" id="Q68985"/>
<dbReference type="IntAct" id="Q68985">
    <property type="interactions" value="2"/>
</dbReference>
<dbReference type="iPTMnet" id="Q68985"/>
<dbReference type="Proteomes" id="UP000007244">
    <property type="component" value="Genome"/>
</dbReference>
<dbReference type="GO" id="GO:0005576">
    <property type="term" value="C:extracellular region"/>
    <property type="evidence" value="ECO:0007669"/>
    <property type="project" value="UniProtKB-SubCell"/>
</dbReference>
<dbReference type="GO" id="GO:0044165">
    <property type="term" value="C:host cell endoplasmic reticulum"/>
    <property type="evidence" value="ECO:0007669"/>
    <property type="project" value="UniProtKB-SubCell"/>
</dbReference>
<dbReference type="GO" id="GO:0044177">
    <property type="term" value="C:host cell Golgi apparatus"/>
    <property type="evidence" value="ECO:0007669"/>
    <property type="project" value="UniProtKB-SubCell"/>
</dbReference>
<dbReference type="GO" id="GO:0044228">
    <property type="term" value="C:host cell surface"/>
    <property type="evidence" value="ECO:0007669"/>
    <property type="project" value="UniProtKB-SubCell"/>
</dbReference>
<dbReference type="GO" id="GO:0039615">
    <property type="term" value="C:T=1 icosahedral viral capsid"/>
    <property type="evidence" value="ECO:0007669"/>
    <property type="project" value="UniProtKB-KW"/>
</dbReference>
<dbReference type="GO" id="GO:0042802">
    <property type="term" value="F:identical protein binding"/>
    <property type="evidence" value="ECO:0000353"/>
    <property type="project" value="IntAct"/>
</dbReference>
<dbReference type="GO" id="GO:0003723">
    <property type="term" value="F:RNA binding"/>
    <property type="evidence" value="ECO:0007669"/>
    <property type="project" value="UniProtKB-KW"/>
</dbReference>
<dbReference type="GO" id="GO:0005198">
    <property type="term" value="F:structural molecule activity"/>
    <property type="evidence" value="ECO:0007669"/>
    <property type="project" value="InterPro"/>
</dbReference>
<dbReference type="GO" id="GO:0098670">
    <property type="term" value="P:entry receptor-mediated virion attachment to host cell"/>
    <property type="evidence" value="ECO:0007669"/>
    <property type="project" value="UniProtKB-KW"/>
</dbReference>
<dbReference type="GO" id="GO:0046718">
    <property type="term" value="P:symbiont entry into host cell"/>
    <property type="evidence" value="ECO:0007669"/>
    <property type="project" value="UniProtKB-KW"/>
</dbReference>
<dbReference type="FunFam" id="2.40.30.190:FF:000001">
    <property type="entry name" value="Secreted protein ORF2"/>
    <property type="match status" value="1"/>
</dbReference>
<dbReference type="FunFam" id="2.60.120.20:FF:000010">
    <property type="entry name" value="Secreted protein ORF2"/>
    <property type="match status" value="1"/>
</dbReference>
<dbReference type="Gene3D" id="2.40.30.190">
    <property type="match status" value="1"/>
</dbReference>
<dbReference type="Gene3D" id="2.60.120.20">
    <property type="match status" value="1"/>
</dbReference>
<dbReference type="InterPro" id="IPR048794">
    <property type="entry name" value="SP2_C"/>
</dbReference>
<dbReference type="InterPro" id="IPR048802">
    <property type="entry name" value="SP2_M"/>
</dbReference>
<dbReference type="InterPro" id="IPR004261">
    <property type="entry name" value="SP2_N"/>
</dbReference>
<dbReference type="InterPro" id="IPR029053">
    <property type="entry name" value="Viral_coat"/>
</dbReference>
<dbReference type="Pfam" id="PF03014">
    <property type="entry name" value="SP2"/>
    <property type="match status" value="1"/>
</dbReference>
<dbReference type="Pfam" id="PF20752">
    <property type="entry name" value="SP2_C"/>
    <property type="match status" value="1"/>
</dbReference>
<dbReference type="Pfam" id="PF20751">
    <property type="entry name" value="SP2_M"/>
    <property type="match status" value="1"/>
</dbReference>
<dbReference type="SUPFAM" id="SSF88633">
    <property type="entry name" value="Positive stranded ssRNA viruses"/>
    <property type="match status" value="1"/>
</dbReference>
<protein>
    <recommendedName>
        <fullName>Pro-secreted protein ORF2</fullName>
    </recommendedName>
    <alternativeName>
        <fullName>Protein ORF2</fullName>
        <shortName>pORF2</shortName>
    </alternativeName>
    <component>
        <recommendedName>
            <fullName>Secreted protein ORF2</fullName>
            <shortName>ORF2s</shortName>
        </recommendedName>
    </component>
</protein>